<comment type="function">
    <text evidence="7 9 10">Microtubule-dependent motor protein that acts as a negative regulator of ciliogenesis by mediating recruitment of CCP110 to mother centriole in cycling cells, leading to restrict nucleation of cilia at centrioles. Mediates depolymerization of microtubules of centriolar origin, possibly to suppress aberrant cilia formation (PubMed:21620453). Following activation by NEK2 involved in disassembly of primary cilium during G2/M phase but does not disassemble fully formed ciliary axonemes. As cilium assembly and disassembly is proposed to coexist in a dynamic equilibrium may suppress nascent cilium assembly and, potentially, ciliar re-assembly in cells that have already disassembled their cilia ensuring the completion of cilium removal in the later stages of the cell cycle (PubMed:26290419). Plays an important role in recruiting MPHOSPH9, a negative regulator of cilia formation to the distal end of mother centriole (PubMed:30375385).</text>
</comment>
<comment type="subunit">
    <text evidence="7 8 10">Interacts with CCP110, CEP97, TALPID3 (PubMed:21620453, PubMed:24421332). Interacts with MPHOSPH9 (PubMed:30375385).</text>
</comment>
<comment type="interaction">
    <interactant intactId="EBI-2556811">
        <id>Q5T7B8</id>
    </interactant>
    <interactant intactId="EBI-1566217">
        <id>O43303</id>
        <label>CCP110</label>
    </interactant>
    <organismsDiffer>false</organismsDiffer>
    <experiments>15</experiments>
</comment>
<comment type="interaction">
    <interactant intactId="EBI-2556811">
        <id>Q5T7B8</id>
    </interactant>
    <interactant intactId="EBI-1566210">
        <id>Q8IW35</id>
        <label>CEP97</label>
    </interactant>
    <organismsDiffer>false</organismsDiffer>
    <experiments>14</experiments>
</comment>
<comment type="interaction">
    <interactant intactId="EBI-2556811">
        <id>Q5T7B8</id>
    </interactant>
    <interactant intactId="EBI-2556811">
        <id>Q5T7B8</id>
        <label>KIF24</label>
    </interactant>
    <organismsDiffer>false</organismsDiffer>
    <experiments>2</experiments>
</comment>
<comment type="interaction">
    <interactant intactId="EBI-2556811">
        <id>Q5T7B8</id>
    </interactant>
    <interactant intactId="EBI-633182">
        <id>P51955</id>
        <label>NEK2</label>
    </interactant>
    <organismsDiffer>false</organismsDiffer>
    <experiments>7</experiments>
</comment>
<comment type="interaction">
    <interactant intactId="EBI-10213781">
        <id>Q5T7B8-2</id>
    </interactant>
    <interactant intactId="EBI-541426">
        <id>Q9BXS5</id>
        <label>AP1M1</label>
    </interactant>
    <organismsDiffer>false</organismsDiffer>
    <experiments>3</experiments>
</comment>
<comment type="interaction">
    <interactant intactId="EBI-10213781">
        <id>Q5T7B8-2</id>
    </interactant>
    <interactant intactId="EBI-347804">
        <id>P68400</id>
        <label>CSNK2A1</label>
    </interactant>
    <organismsDiffer>false</organismsDiffer>
    <experiments>3</experiments>
</comment>
<comment type="interaction">
    <interactant intactId="EBI-10213781">
        <id>Q5T7B8-2</id>
    </interactant>
    <interactant intactId="EBI-5453285">
        <id>Q2TBE0</id>
        <label>CWF19L2</label>
    </interactant>
    <organismsDiffer>false</organismsDiffer>
    <experiments>3</experiments>
</comment>
<comment type="interaction">
    <interactant intactId="EBI-10213781">
        <id>Q5T7B8-2</id>
    </interactant>
    <interactant intactId="EBI-7116203">
        <id>O75031</id>
        <label>HSF2BP</label>
    </interactant>
    <organismsDiffer>false</organismsDiffer>
    <experiments>3</experiments>
</comment>
<comment type="interaction">
    <interactant intactId="EBI-10213781">
        <id>Q5T7B8-2</id>
    </interactant>
    <interactant intactId="EBI-739832">
        <id>Q8TBB1</id>
        <label>LNX1</label>
    </interactant>
    <organismsDiffer>false</organismsDiffer>
    <experiments>3</experiments>
</comment>
<comment type="interaction">
    <interactant intactId="EBI-10213781">
        <id>Q5T7B8-2</id>
    </interactant>
    <interactant intactId="EBI-7950783">
        <id>Q96JP2</id>
        <label>MYO15B</label>
    </interactant>
    <organismsDiffer>false</organismsDiffer>
    <experiments>3</experiments>
</comment>
<comment type="interaction">
    <interactant intactId="EBI-10213781">
        <id>Q5T7B8-2</id>
    </interactant>
    <interactant intactId="EBI-1383852">
        <id>P54646</id>
        <label>PRKAA2</label>
    </interactant>
    <organismsDiffer>false</organismsDiffer>
    <experiments>3</experiments>
</comment>
<comment type="interaction">
    <interactant intactId="EBI-10213781">
        <id>Q5T7B8-2</id>
    </interactant>
    <interactant intactId="EBI-12028066">
        <id>Q86VV4</id>
        <label>RANBP3L</label>
    </interactant>
    <organismsDiffer>false</organismsDiffer>
    <experiments>3</experiments>
</comment>
<comment type="interaction">
    <interactant intactId="EBI-10213781">
        <id>Q5T7B8-2</id>
    </interactant>
    <interactant intactId="EBI-373337">
        <id>O76064</id>
        <label>RNF8</label>
    </interactant>
    <organismsDiffer>false</organismsDiffer>
    <experiments>3</experiments>
</comment>
<comment type="interaction">
    <interactant intactId="EBI-10213781">
        <id>Q5T7B8-2</id>
    </interactant>
    <interactant intactId="EBI-10246152">
        <id>Q5T7P8-2</id>
        <label>SYT6</label>
    </interactant>
    <organismsDiffer>false</organismsDiffer>
    <experiments>3</experiments>
</comment>
<comment type="subcellular location">
    <subcellularLocation>
        <location evidence="7 10">Cytoplasm</location>
        <location evidence="7 10">Cytoskeleton</location>
        <location evidence="7 10">Microtubule organizing center</location>
        <location evidence="7 10">Centrosome</location>
        <location evidence="7 10">Centriole</location>
    </subcellularLocation>
    <subcellularLocation>
        <location evidence="10">Cytoplasm</location>
        <location evidence="10">Cytoskeleton</location>
        <location evidence="10">Microtubule organizing center</location>
        <location evidence="10">Centrosome</location>
    </subcellularLocation>
    <text>Primarily localizes to the mother centriole/basal body and is either absent at daughter centriole.</text>
</comment>
<comment type="alternative products">
    <event type="alternative splicing"/>
    <isoform>
        <id>Q5T7B8-1</id>
        <name>1</name>
        <sequence type="displayed"/>
    </isoform>
    <isoform>
        <id>Q5T7B8-2</id>
        <name>2</name>
        <sequence type="described" ref="VSP_023210"/>
    </isoform>
    <isoform>
        <id>Q5T7B8-3</id>
        <name>3</name>
        <sequence type="described" ref="VSP_023211"/>
    </isoform>
    <isoform>
        <id>Q5T7B8-4</id>
        <name>4</name>
        <sequence type="described" ref="VSP_023212 VSP_023213"/>
    </isoform>
</comment>
<comment type="developmental stage">
    <text evidence="7">Increases as cells progress through G1, peaks during S and G2 phases and decreases as cells enter mitosis during G2/M (at protein level).</text>
</comment>
<comment type="similarity">
    <text evidence="3">Belongs to the TRAFAC class myosin-kinesin ATPase superfamily. Kinesin family.</text>
</comment>
<comment type="sequence caution" evidence="13">
    <conflict type="erroneous initiation">
        <sequence resource="EMBL-CDS" id="AAI10504"/>
    </conflict>
    <text>Truncated N-terminus.</text>
</comment>
<comment type="sequence caution" evidence="13">
    <conflict type="erroneous initiation">
        <sequence resource="EMBL-CDS" id="BAC86074"/>
    </conflict>
    <text>Truncated N-terminus.</text>
</comment>
<comment type="sequence caution" evidence="13">
    <conflict type="erroneous initiation">
        <sequence resource="EMBL-CDS" id="BAC86329"/>
    </conflict>
    <text>Truncated N-terminus.</text>
</comment>
<gene>
    <name type="primary">KIF24</name>
    <name type="synonym">C9orf48</name>
</gene>
<organism>
    <name type="scientific">Homo sapiens</name>
    <name type="common">Human</name>
    <dbReference type="NCBI Taxonomy" id="9606"/>
    <lineage>
        <taxon>Eukaryota</taxon>
        <taxon>Metazoa</taxon>
        <taxon>Chordata</taxon>
        <taxon>Craniata</taxon>
        <taxon>Vertebrata</taxon>
        <taxon>Euteleostomi</taxon>
        <taxon>Mammalia</taxon>
        <taxon>Eutheria</taxon>
        <taxon>Euarchontoglires</taxon>
        <taxon>Primates</taxon>
        <taxon>Haplorrhini</taxon>
        <taxon>Catarrhini</taxon>
        <taxon>Hominidae</taxon>
        <taxon>Homo</taxon>
    </lineage>
</organism>
<protein>
    <recommendedName>
        <fullName>Kinesin-like protein KIF24</fullName>
    </recommendedName>
</protein>
<keyword id="KW-0025">Alternative splicing</keyword>
<keyword id="KW-0067">ATP-binding</keyword>
<keyword id="KW-0970">Cilium biogenesis/degradation</keyword>
<keyword id="KW-0963">Cytoplasm</keyword>
<keyword id="KW-0206">Cytoskeleton</keyword>
<keyword id="KW-0493">Microtubule</keyword>
<keyword id="KW-0505">Motor protein</keyword>
<keyword id="KW-0547">Nucleotide-binding</keyword>
<keyword id="KW-0597">Phosphoprotein</keyword>
<keyword id="KW-1267">Proteomics identification</keyword>
<keyword id="KW-1185">Reference proteome</keyword>
<evidence type="ECO:0000250" key="1">
    <source>
        <dbReference type="UniProtKB" id="Q6NWW5"/>
    </source>
</evidence>
<evidence type="ECO:0000255" key="2">
    <source>
        <dbReference type="PROSITE-ProRule" id="PRU00184"/>
    </source>
</evidence>
<evidence type="ECO:0000255" key="3">
    <source>
        <dbReference type="PROSITE-ProRule" id="PRU00283"/>
    </source>
</evidence>
<evidence type="ECO:0000256" key="4">
    <source>
        <dbReference type="SAM" id="MobiDB-lite"/>
    </source>
</evidence>
<evidence type="ECO:0000269" key="5">
    <source>
    </source>
</evidence>
<evidence type="ECO:0000269" key="6">
    <source>
    </source>
</evidence>
<evidence type="ECO:0000269" key="7">
    <source>
    </source>
</evidence>
<evidence type="ECO:0000269" key="8">
    <source>
    </source>
</evidence>
<evidence type="ECO:0000269" key="9">
    <source>
    </source>
</evidence>
<evidence type="ECO:0000269" key="10">
    <source>
    </source>
</evidence>
<evidence type="ECO:0000303" key="11">
    <source>
    </source>
</evidence>
<evidence type="ECO:0000303" key="12">
    <source>
    </source>
</evidence>
<evidence type="ECO:0000305" key="13"/>
<evidence type="ECO:0007744" key="14">
    <source>
    </source>
</evidence>
<evidence type="ECO:0007744" key="15">
    <source>
    </source>
</evidence>
<evidence type="ECO:0007744" key="16">
    <source>
    </source>
</evidence>
<name>KIF24_HUMAN</name>
<accession>Q5T7B8</accession>
<accession>Q2TB93</accession>
<accession>Q5T7B5</accession>
<accession>Q5T7B7</accession>
<accession>Q6ZU97</accession>
<accession>Q6ZUZ2</accession>
<accession>Q86XZ0</accession>
<accession>Q9NV43</accession>
<proteinExistence type="evidence at protein level"/>
<reference key="1">
    <citation type="journal article" date="2004" name="Nature">
        <title>DNA sequence and analysis of human chromosome 9.</title>
        <authorList>
            <person name="Humphray S.J."/>
            <person name="Oliver K."/>
            <person name="Hunt A.R."/>
            <person name="Plumb R.W."/>
            <person name="Loveland J.E."/>
            <person name="Howe K.L."/>
            <person name="Andrews T.D."/>
            <person name="Searle S."/>
            <person name="Hunt S.E."/>
            <person name="Scott C.E."/>
            <person name="Jones M.C."/>
            <person name="Ainscough R."/>
            <person name="Almeida J.P."/>
            <person name="Ambrose K.D."/>
            <person name="Ashwell R.I.S."/>
            <person name="Babbage A.K."/>
            <person name="Babbage S."/>
            <person name="Bagguley C.L."/>
            <person name="Bailey J."/>
            <person name="Banerjee R."/>
            <person name="Barker D.J."/>
            <person name="Barlow K.F."/>
            <person name="Bates K."/>
            <person name="Beasley H."/>
            <person name="Beasley O."/>
            <person name="Bird C.P."/>
            <person name="Bray-Allen S."/>
            <person name="Brown A.J."/>
            <person name="Brown J.Y."/>
            <person name="Burford D."/>
            <person name="Burrill W."/>
            <person name="Burton J."/>
            <person name="Carder C."/>
            <person name="Carter N.P."/>
            <person name="Chapman J.C."/>
            <person name="Chen Y."/>
            <person name="Clarke G."/>
            <person name="Clark S.Y."/>
            <person name="Clee C.M."/>
            <person name="Clegg S."/>
            <person name="Collier R.E."/>
            <person name="Corby N."/>
            <person name="Crosier M."/>
            <person name="Cummings A.T."/>
            <person name="Davies J."/>
            <person name="Dhami P."/>
            <person name="Dunn M."/>
            <person name="Dutta I."/>
            <person name="Dyer L.W."/>
            <person name="Earthrowl M.E."/>
            <person name="Faulkner L."/>
            <person name="Fleming C.J."/>
            <person name="Frankish A."/>
            <person name="Frankland J.A."/>
            <person name="French L."/>
            <person name="Fricker D.G."/>
            <person name="Garner P."/>
            <person name="Garnett J."/>
            <person name="Ghori J."/>
            <person name="Gilbert J.G.R."/>
            <person name="Glison C."/>
            <person name="Grafham D.V."/>
            <person name="Gribble S."/>
            <person name="Griffiths C."/>
            <person name="Griffiths-Jones S."/>
            <person name="Grocock R."/>
            <person name="Guy J."/>
            <person name="Hall R.E."/>
            <person name="Hammond S."/>
            <person name="Harley J.L."/>
            <person name="Harrison E.S.I."/>
            <person name="Hart E.A."/>
            <person name="Heath P.D."/>
            <person name="Henderson C.D."/>
            <person name="Hopkins B.L."/>
            <person name="Howard P.J."/>
            <person name="Howden P.J."/>
            <person name="Huckle E."/>
            <person name="Johnson C."/>
            <person name="Johnson D."/>
            <person name="Joy A.A."/>
            <person name="Kay M."/>
            <person name="Keenan S."/>
            <person name="Kershaw J.K."/>
            <person name="Kimberley A.M."/>
            <person name="King A."/>
            <person name="Knights A."/>
            <person name="Laird G.K."/>
            <person name="Langford C."/>
            <person name="Lawlor S."/>
            <person name="Leongamornlert D.A."/>
            <person name="Leversha M."/>
            <person name="Lloyd C."/>
            <person name="Lloyd D.M."/>
            <person name="Lovell J."/>
            <person name="Martin S."/>
            <person name="Mashreghi-Mohammadi M."/>
            <person name="Matthews L."/>
            <person name="McLaren S."/>
            <person name="McLay K.E."/>
            <person name="McMurray A."/>
            <person name="Milne S."/>
            <person name="Nickerson T."/>
            <person name="Nisbett J."/>
            <person name="Nordsiek G."/>
            <person name="Pearce A.V."/>
            <person name="Peck A.I."/>
            <person name="Porter K.M."/>
            <person name="Pandian R."/>
            <person name="Pelan S."/>
            <person name="Phillimore B."/>
            <person name="Povey S."/>
            <person name="Ramsey Y."/>
            <person name="Rand V."/>
            <person name="Scharfe M."/>
            <person name="Sehra H.K."/>
            <person name="Shownkeen R."/>
            <person name="Sims S.K."/>
            <person name="Skuce C.D."/>
            <person name="Smith M."/>
            <person name="Steward C.A."/>
            <person name="Swarbreck D."/>
            <person name="Sycamore N."/>
            <person name="Tester J."/>
            <person name="Thorpe A."/>
            <person name="Tracey A."/>
            <person name="Tromans A."/>
            <person name="Thomas D.W."/>
            <person name="Wall M."/>
            <person name="Wallis J.M."/>
            <person name="West A.P."/>
            <person name="Whitehead S.L."/>
            <person name="Willey D.L."/>
            <person name="Williams S.A."/>
            <person name="Wilming L."/>
            <person name="Wray P.W."/>
            <person name="Young L."/>
            <person name="Ashurst J.L."/>
            <person name="Coulson A."/>
            <person name="Blocker H."/>
            <person name="Durbin R.M."/>
            <person name="Sulston J.E."/>
            <person name="Hubbard T."/>
            <person name="Jackson M.J."/>
            <person name="Bentley D.R."/>
            <person name="Beck S."/>
            <person name="Rogers J."/>
            <person name="Dunham I."/>
        </authorList>
    </citation>
    <scope>NUCLEOTIDE SEQUENCE [LARGE SCALE GENOMIC DNA]</scope>
</reference>
<reference key="2">
    <citation type="journal article" date="2004" name="Nat. Genet.">
        <title>Complete sequencing and characterization of 21,243 full-length human cDNAs.</title>
        <authorList>
            <person name="Ota T."/>
            <person name="Suzuki Y."/>
            <person name="Nishikawa T."/>
            <person name="Otsuki T."/>
            <person name="Sugiyama T."/>
            <person name="Irie R."/>
            <person name="Wakamatsu A."/>
            <person name="Hayashi K."/>
            <person name="Sato H."/>
            <person name="Nagai K."/>
            <person name="Kimura K."/>
            <person name="Makita H."/>
            <person name="Sekine M."/>
            <person name="Obayashi M."/>
            <person name="Nishi T."/>
            <person name="Shibahara T."/>
            <person name="Tanaka T."/>
            <person name="Ishii S."/>
            <person name="Yamamoto J."/>
            <person name="Saito K."/>
            <person name="Kawai Y."/>
            <person name="Isono Y."/>
            <person name="Nakamura Y."/>
            <person name="Nagahari K."/>
            <person name="Murakami K."/>
            <person name="Yasuda T."/>
            <person name="Iwayanagi T."/>
            <person name="Wagatsuma M."/>
            <person name="Shiratori A."/>
            <person name="Sudo H."/>
            <person name="Hosoiri T."/>
            <person name="Kaku Y."/>
            <person name="Kodaira H."/>
            <person name="Kondo H."/>
            <person name="Sugawara M."/>
            <person name="Takahashi M."/>
            <person name="Kanda K."/>
            <person name="Yokoi T."/>
            <person name="Furuya T."/>
            <person name="Kikkawa E."/>
            <person name="Omura Y."/>
            <person name="Abe K."/>
            <person name="Kamihara K."/>
            <person name="Katsuta N."/>
            <person name="Sato K."/>
            <person name="Tanikawa M."/>
            <person name="Yamazaki M."/>
            <person name="Ninomiya K."/>
            <person name="Ishibashi T."/>
            <person name="Yamashita H."/>
            <person name="Murakawa K."/>
            <person name="Fujimori K."/>
            <person name="Tanai H."/>
            <person name="Kimata M."/>
            <person name="Watanabe M."/>
            <person name="Hiraoka S."/>
            <person name="Chiba Y."/>
            <person name="Ishida S."/>
            <person name="Ono Y."/>
            <person name="Takiguchi S."/>
            <person name="Watanabe S."/>
            <person name="Yosida M."/>
            <person name="Hotuta T."/>
            <person name="Kusano J."/>
            <person name="Kanehori K."/>
            <person name="Takahashi-Fujii A."/>
            <person name="Hara H."/>
            <person name="Tanase T.-O."/>
            <person name="Nomura Y."/>
            <person name="Togiya S."/>
            <person name="Komai F."/>
            <person name="Hara R."/>
            <person name="Takeuchi K."/>
            <person name="Arita M."/>
            <person name="Imose N."/>
            <person name="Musashino K."/>
            <person name="Yuuki H."/>
            <person name="Oshima A."/>
            <person name="Sasaki N."/>
            <person name="Aotsuka S."/>
            <person name="Yoshikawa Y."/>
            <person name="Matsunawa H."/>
            <person name="Ichihara T."/>
            <person name="Shiohata N."/>
            <person name="Sano S."/>
            <person name="Moriya S."/>
            <person name="Momiyama H."/>
            <person name="Satoh N."/>
            <person name="Takami S."/>
            <person name="Terashima Y."/>
            <person name="Suzuki O."/>
            <person name="Nakagawa S."/>
            <person name="Senoh A."/>
            <person name="Mizoguchi H."/>
            <person name="Goto Y."/>
            <person name="Shimizu F."/>
            <person name="Wakebe H."/>
            <person name="Hishigaki H."/>
            <person name="Watanabe T."/>
            <person name="Sugiyama A."/>
            <person name="Takemoto M."/>
            <person name="Kawakami B."/>
            <person name="Yamazaki M."/>
            <person name="Watanabe K."/>
            <person name="Kumagai A."/>
            <person name="Itakura S."/>
            <person name="Fukuzumi Y."/>
            <person name="Fujimori Y."/>
            <person name="Komiyama M."/>
            <person name="Tashiro H."/>
            <person name="Tanigami A."/>
            <person name="Fujiwara T."/>
            <person name="Ono T."/>
            <person name="Yamada K."/>
            <person name="Fujii Y."/>
            <person name="Ozaki K."/>
            <person name="Hirao M."/>
            <person name="Ohmori Y."/>
            <person name="Kawabata A."/>
            <person name="Hikiji T."/>
            <person name="Kobatake N."/>
            <person name="Inagaki H."/>
            <person name="Ikema Y."/>
            <person name="Okamoto S."/>
            <person name="Okitani R."/>
            <person name="Kawakami T."/>
            <person name="Noguchi S."/>
            <person name="Itoh T."/>
            <person name="Shigeta K."/>
            <person name="Senba T."/>
            <person name="Matsumura K."/>
            <person name="Nakajima Y."/>
            <person name="Mizuno T."/>
            <person name="Morinaga M."/>
            <person name="Sasaki M."/>
            <person name="Togashi T."/>
            <person name="Oyama M."/>
            <person name="Hata H."/>
            <person name="Watanabe M."/>
            <person name="Komatsu T."/>
            <person name="Mizushima-Sugano J."/>
            <person name="Satoh T."/>
            <person name="Shirai Y."/>
            <person name="Takahashi Y."/>
            <person name="Nakagawa K."/>
            <person name="Okumura K."/>
            <person name="Nagase T."/>
            <person name="Nomura N."/>
            <person name="Kikuchi H."/>
            <person name="Masuho Y."/>
            <person name="Yamashita R."/>
            <person name="Nakai K."/>
            <person name="Yada T."/>
            <person name="Nakamura Y."/>
            <person name="Ohara O."/>
            <person name="Isogai T."/>
            <person name="Sugano S."/>
        </authorList>
    </citation>
    <scope>NUCLEOTIDE SEQUENCE [LARGE SCALE MRNA] OF 503-1368 (ISOFORM 1)</scope>
    <scope>NUCLEOTIDE SEQUENCE [LARGE SCALE MRNA] OF 32-1368 (ISOFORM 3)</scope>
    <scope>VARIANT PHE-837</scope>
    <source>
        <tissue>Fetal brain</tissue>
        <tissue>Ovarian carcinoma</tissue>
        <tissue>Testis</tissue>
    </source>
</reference>
<reference key="3">
    <citation type="journal article" date="2004" name="Genome Res.">
        <title>The status, quality, and expansion of the NIH full-length cDNA project: the Mammalian Gene Collection (MGC).</title>
        <authorList>
            <consortium name="The MGC Project Team"/>
        </authorList>
    </citation>
    <scope>NUCLEOTIDE SEQUENCE [LARGE SCALE MRNA] OF 509-1368 (ISOFORM 1)</scope>
    <scope>NUCLEOTIDE SEQUENCE [LARGE SCALE MRNA] OF 956-1368 (ISOFORM 4)</scope>
    <scope>VARIANT PHE-837</scope>
    <source>
        <tissue>Duodenum</tissue>
    </source>
</reference>
<reference key="4">
    <citation type="journal article" date="2008" name="Mol. Cell">
        <title>Kinase-selective enrichment enables quantitative phosphoproteomics of the kinome across the cell cycle.</title>
        <authorList>
            <person name="Daub H."/>
            <person name="Olsen J.V."/>
            <person name="Bairlein M."/>
            <person name="Gnad F."/>
            <person name="Oppermann F.S."/>
            <person name="Korner R."/>
            <person name="Greff Z."/>
            <person name="Keri G."/>
            <person name="Stemmann O."/>
            <person name="Mann M."/>
        </authorList>
    </citation>
    <scope>PHOSPHORYLATION [LARGE SCALE ANALYSIS] AT SER-102; SER-478 AND SER-1012</scope>
    <scope>IDENTIFICATION BY MASS SPECTROMETRY [LARGE SCALE ANALYSIS]</scope>
    <source>
        <tissue>Cervix carcinoma</tissue>
    </source>
</reference>
<reference key="5">
    <citation type="journal article" date="2009" name="Mol. Cell. Proteomics">
        <title>Large-scale proteomics analysis of the human kinome.</title>
        <authorList>
            <person name="Oppermann F.S."/>
            <person name="Gnad F."/>
            <person name="Olsen J.V."/>
            <person name="Hornberger R."/>
            <person name="Greff Z."/>
            <person name="Keri G."/>
            <person name="Mann M."/>
            <person name="Daub H."/>
        </authorList>
    </citation>
    <scope>PHOSPHORYLATION [LARGE SCALE ANALYSIS] AT SER-112; SER-478 AND SER-646</scope>
    <scope>IDENTIFICATION BY MASS SPECTROMETRY [LARGE SCALE ANALYSIS]</scope>
</reference>
<reference key="6">
    <citation type="journal article" date="2011" name="Cell">
        <title>Centriolar kinesin Kif24 interacts with CP110 to remodel microtubules and regulate ciliogenesis.</title>
        <authorList>
            <person name="Kobayashi T."/>
            <person name="Tsang W.Y."/>
            <person name="Li J."/>
            <person name="Lane W."/>
            <person name="Dynlacht B.D."/>
        </authorList>
    </citation>
    <scope>FUNCTION</scope>
    <scope>SUBCELLULAR LOCATION</scope>
    <scope>DEVELOPMENTAL STAGE</scope>
    <scope>INTERACTION WITH CCP110 AND CEP97</scope>
    <scope>MUTAGENESIS OF 263-VAL-ASP-264 AND 483-LYS--CYS-485</scope>
</reference>
<reference key="7">
    <citation type="journal article" date="2013" name="J. Proteome Res.">
        <title>Toward a comprehensive characterization of a human cancer cell phosphoproteome.</title>
        <authorList>
            <person name="Zhou H."/>
            <person name="Di Palma S."/>
            <person name="Preisinger C."/>
            <person name="Peng M."/>
            <person name="Polat A.N."/>
            <person name="Heck A.J."/>
            <person name="Mohammed S."/>
        </authorList>
    </citation>
    <scope>PHOSPHORYLATION [LARGE SCALE ANALYSIS] AT SER-478 AND SER-646</scope>
    <scope>IDENTIFICATION BY MASS SPECTROMETRY [LARGE SCALE ANALYSIS]</scope>
    <source>
        <tissue>Cervix carcinoma</tissue>
        <tissue>Erythroleukemia</tissue>
    </source>
</reference>
<reference key="8">
    <citation type="journal article" date="2014" name="J. Cell Biol.">
        <title>The CP110-interacting proteins Talpid3 and Cep290 play overlapping and distinct roles in cilia assembly.</title>
        <authorList>
            <person name="Kobayashi T."/>
            <person name="Kim S."/>
            <person name="Lin Y.C."/>
            <person name="Inoue T."/>
            <person name="Dynlacht B.D."/>
        </authorList>
    </citation>
    <scope>INTERACTION WITH TALPID3</scope>
</reference>
<reference key="9">
    <citation type="journal article" date="2015" name="Nat. Commun.">
        <title>Nek2 activation of Kif24 ensures cilium disassembly during the cell cycle.</title>
        <authorList>
            <person name="Kim S."/>
            <person name="Lee K."/>
            <person name="Choi J.H."/>
            <person name="Ringstad N."/>
            <person name="Dynlacht B.D."/>
        </authorList>
    </citation>
    <scope>FUNCTION</scope>
    <scope>PHOSPHORYLATION AT THR-621 AND SER-622</scope>
    <scope>MUTAGENESIS OF 621-THR-SER-622</scope>
</reference>
<reference key="10">
    <citation type="journal article" date="2018" name="Nat. Commun.">
        <title>M-Phase Phosphoprotein 9 regulates ciliogenesis by modulating CP110-CEP97 complex localization at the mother centriole.</title>
        <authorList>
            <person name="Huang N."/>
            <person name="Zhang D."/>
            <person name="Li F."/>
            <person name="Chai P."/>
            <person name="Wang S."/>
            <person name="Teng J."/>
            <person name="Chen J."/>
        </authorList>
    </citation>
    <scope>FUNCTION</scope>
    <scope>SUBCELLULAR LOCATION</scope>
    <scope>INTERACTION WITH MPHOSPH9</scope>
</reference>
<sequence>MASWLYECLCEAELAQYYSHFTALGLQKIDELAKITMKDYSKLGVHDMNDRKRLFQLIKIIKIMQEEDKAVSIPERHLQTSSLRIKSQELRSGPRRQLNFDSPADNKDRNASNDGFEMCSLSDFSANEQKSTYLKVLEHMLPDDSQYHTKTGILNATAGDSYVQTEISTSLFSPNYLSAILGDCDIPIIQRISHVSGYNYGIPHSCIRQNTSEKQNPWTEMEKIRVCVRKRPLGMREVRRGEINIITVEDKETLLVHEKKEAVDLTQYILQHVFYFDEVFGEACTNQDVYMKTTHPLIQHIFNGGNATCFAYGQTGAGKTYTMIGTHENPGLYALAAKDIFRQLEVSQPRKHLFVWISFYEIYCGQLYDLLNRRKRLFAREDSKHMVQIVGLQELQVDSVELLLEVILKGSKERSTGATGVNADSSRSHAVIQIQIKDSAKRTFGRISFIDLAGSERAADARDSDRQTKMEGAEINQSLLALKECIRALDQEHTHTPFRQSKLTQVLKDSFIGNAKTCMIANISPSHVATEHTLNTLRYADRVKELKKGIKCCTSVTSRNRTSGNSSPKRIQSSPGALSEDKCSPKKVKLGFQQSLTVAAPGSTRGKVHPLTSHPPNIPFTSAPKVSGKRGGSRGSPSQEWVIHASPVKGTVRSGHVAKKKPEESAPLCSEKNRMGNKTVLGWESRASGPGEGLVRGKLSTKCKKVQTVQPVQKQLVSRVELSFGNAHHRAEYSQDSQRGTPARPASEAWTNIPPHQKEREEHLRFYHQQFQQPPLLQQKLKYQPLKRSLRQYRPPEGQLTNETPPLFHSYSENHDGAQVEELDDSDFSEDSFSHISSQRATKQRNTLENSEDSFFLHQTWGQGPEKQVAERQQSLFSSPRTGDKKDLTKSWVDSRDPINHRRAALDHSCSPSKGPVDWSRENSTSSGPSPRDSLAEKPYCSQVDFIYRQERGGGSSFDLRKDASQSEVSGENEGNLPSPEEDGFTISLSHVAVPGSPDQRDTVTTPLREVSADGPIQVTSTVKNGHAVPGEDPRGQLGTHAEYASGLMSPLTMSLLENPDNEGSPPSEQLVQDGATHSLVAESTGGPVVSHTVPSGDQEAALPVSSATRHLWLSSSPPDNKPGGDLPALSPSPIRQHPADKLPSREADLGEACQSRETVLFSHEHMGSEQYDADAEETGLDGSWGFPGKPFTTIHMGVPHSGPTLTPRTGSSDVADQLWAQERKHPTRLGWQEFGLSTDPIKLPCNSENVTWLKPRPISRCLARPSSPLVPSCSPKTAGTLRQPTLEQAQQVVIRAHQEQLDEMAELGFKEETLMSQLASNDFEDFVTQLDEIMVLKSKCIQSLRSQLQLYLTCHGPTAAPEGTVPS</sequence>
<dbReference type="EMBL" id="AL353662">
    <property type="status" value="NOT_ANNOTATED_CDS"/>
    <property type="molecule type" value="Genomic_DNA"/>
</dbReference>
<dbReference type="EMBL" id="AK001795">
    <property type="status" value="NOT_ANNOTATED_CDS"/>
    <property type="molecule type" value="mRNA"/>
</dbReference>
<dbReference type="EMBL" id="AK125180">
    <property type="protein sequence ID" value="BAC86074.1"/>
    <property type="status" value="ALT_INIT"/>
    <property type="molecule type" value="mRNA"/>
</dbReference>
<dbReference type="EMBL" id="AK125872">
    <property type="protein sequence ID" value="BAC86329.1"/>
    <property type="status" value="ALT_INIT"/>
    <property type="molecule type" value="mRNA"/>
</dbReference>
<dbReference type="EMBL" id="BC048311">
    <property type="protein sequence ID" value="AAH48311.1"/>
    <property type="molecule type" value="mRNA"/>
</dbReference>
<dbReference type="EMBL" id="BC110502">
    <property type="protein sequence ID" value="AAI10503.2"/>
    <property type="molecule type" value="mRNA"/>
</dbReference>
<dbReference type="EMBL" id="BC110503">
    <property type="protein sequence ID" value="AAI10504.1"/>
    <property type="status" value="ALT_INIT"/>
    <property type="molecule type" value="mRNA"/>
</dbReference>
<dbReference type="CCDS" id="CCDS6551.2">
    <molecule id="Q5T7B8-1"/>
</dbReference>
<dbReference type="RefSeq" id="NP_919289.2">
    <molecule id="Q5T7B8-1"/>
    <property type="nucleotide sequence ID" value="NM_194313.4"/>
</dbReference>
<dbReference type="RefSeq" id="XP_011516165.1">
    <molecule id="Q5T7B8-1"/>
    <property type="nucleotide sequence ID" value="XM_011517863.4"/>
</dbReference>
<dbReference type="RefSeq" id="XP_016870186.1">
    <molecule id="Q5T7B8-1"/>
    <property type="nucleotide sequence ID" value="XM_017014697.3"/>
</dbReference>
<dbReference type="SMR" id="Q5T7B8"/>
<dbReference type="BioGRID" id="131415">
    <property type="interactions" value="41"/>
</dbReference>
<dbReference type="FunCoup" id="Q5T7B8">
    <property type="interactions" value="204"/>
</dbReference>
<dbReference type="IntAct" id="Q5T7B8">
    <property type="interactions" value="33"/>
</dbReference>
<dbReference type="STRING" id="9606.ENSP00000384433"/>
<dbReference type="ChEMBL" id="CHEMBL3879840"/>
<dbReference type="iPTMnet" id="Q5T7B8"/>
<dbReference type="PhosphoSitePlus" id="Q5T7B8"/>
<dbReference type="BioMuta" id="KIF24"/>
<dbReference type="DMDM" id="126215732"/>
<dbReference type="jPOST" id="Q5T7B8"/>
<dbReference type="MassIVE" id="Q5T7B8"/>
<dbReference type="PaxDb" id="9606-ENSP00000368464"/>
<dbReference type="PeptideAtlas" id="Q5T7B8"/>
<dbReference type="ProteomicsDB" id="64650">
    <molecule id="Q5T7B8-1"/>
</dbReference>
<dbReference type="ProteomicsDB" id="64651">
    <molecule id="Q5T7B8-2"/>
</dbReference>
<dbReference type="ProteomicsDB" id="64652">
    <molecule id="Q5T7B8-3"/>
</dbReference>
<dbReference type="ProteomicsDB" id="64653">
    <molecule id="Q5T7B8-4"/>
</dbReference>
<dbReference type="Antibodypedia" id="11186">
    <property type="antibodies" value="104 antibodies from 18 providers"/>
</dbReference>
<dbReference type="DNASU" id="347240"/>
<dbReference type="Ensembl" id="ENST00000379174.7">
    <molecule id="Q5T7B8-2"/>
    <property type="protein sequence ID" value="ENSP00000368472.3"/>
    <property type="gene ID" value="ENSG00000186638.17"/>
</dbReference>
<dbReference type="Ensembl" id="ENST00000402558.7">
    <molecule id="Q5T7B8-1"/>
    <property type="protein sequence ID" value="ENSP00000384433.1"/>
    <property type="gene ID" value="ENSG00000186638.17"/>
</dbReference>
<dbReference type="GeneID" id="347240"/>
<dbReference type="KEGG" id="hsa:347240"/>
<dbReference type="MANE-Select" id="ENST00000402558.7">
    <property type="protein sequence ID" value="ENSP00000384433.1"/>
    <property type="RefSeq nucleotide sequence ID" value="NM_194313.4"/>
    <property type="RefSeq protein sequence ID" value="NP_919289.2"/>
</dbReference>
<dbReference type="UCSC" id="uc003zua.5">
    <molecule id="Q5T7B8-1"/>
    <property type="organism name" value="human"/>
</dbReference>
<dbReference type="AGR" id="HGNC:19916"/>
<dbReference type="CTD" id="347240"/>
<dbReference type="DisGeNET" id="347240"/>
<dbReference type="GeneCards" id="KIF24"/>
<dbReference type="HGNC" id="HGNC:19916">
    <property type="gene designation" value="KIF24"/>
</dbReference>
<dbReference type="HPA" id="ENSG00000186638">
    <property type="expression patterns" value="Tissue enhanced (testis)"/>
</dbReference>
<dbReference type="MalaCards" id="KIF24"/>
<dbReference type="MIM" id="613747">
    <property type="type" value="gene"/>
</dbReference>
<dbReference type="neXtProt" id="NX_Q5T7B8"/>
<dbReference type="OpenTargets" id="ENSG00000186638"/>
<dbReference type="PharmGKB" id="PA142671589"/>
<dbReference type="VEuPathDB" id="HostDB:ENSG00000186638"/>
<dbReference type="eggNOG" id="KOG0246">
    <property type="taxonomic scope" value="Eukaryota"/>
</dbReference>
<dbReference type="GeneTree" id="ENSGT00940000154046"/>
<dbReference type="HOGENOM" id="CLU_007560_0_0_1"/>
<dbReference type="InParanoid" id="Q5T7B8"/>
<dbReference type="OMA" id="WGNTFAK"/>
<dbReference type="OrthoDB" id="3176171at2759"/>
<dbReference type="PAN-GO" id="Q5T7B8">
    <property type="GO annotations" value="3 GO annotations based on evolutionary models"/>
</dbReference>
<dbReference type="PhylomeDB" id="Q5T7B8"/>
<dbReference type="TreeFam" id="TF336001"/>
<dbReference type="PathwayCommons" id="Q5T7B8"/>
<dbReference type="Reactome" id="R-HSA-5620912">
    <property type="pathway name" value="Anchoring of the basal body to the plasma membrane"/>
</dbReference>
<dbReference type="SignaLink" id="Q5T7B8"/>
<dbReference type="BioGRID-ORCS" id="347240">
    <property type="hits" value="10 hits in 1165 CRISPR screens"/>
</dbReference>
<dbReference type="ChiTaRS" id="KIF24">
    <property type="organism name" value="human"/>
</dbReference>
<dbReference type="GeneWiki" id="KIF24"/>
<dbReference type="GenomeRNAi" id="347240"/>
<dbReference type="Pharos" id="Q5T7B8">
    <property type="development level" value="Tbio"/>
</dbReference>
<dbReference type="PRO" id="PR:Q5T7B8"/>
<dbReference type="Proteomes" id="UP000005640">
    <property type="component" value="Chromosome 9"/>
</dbReference>
<dbReference type="RNAct" id="Q5T7B8">
    <property type="molecule type" value="protein"/>
</dbReference>
<dbReference type="Bgee" id="ENSG00000186638">
    <property type="expression patterns" value="Expressed in primordial germ cell in gonad and 102 other cell types or tissues"/>
</dbReference>
<dbReference type="GO" id="GO:0005814">
    <property type="term" value="C:centriole"/>
    <property type="evidence" value="ECO:0000314"/>
    <property type="project" value="UniProtKB"/>
</dbReference>
<dbReference type="GO" id="GO:0005813">
    <property type="term" value="C:centrosome"/>
    <property type="evidence" value="ECO:0000314"/>
    <property type="project" value="UniProtKB"/>
</dbReference>
<dbReference type="GO" id="GO:0005829">
    <property type="term" value="C:cytosol"/>
    <property type="evidence" value="ECO:0000304"/>
    <property type="project" value="Reactome"/>
</dbReference>
<dbReference type="GO" id="GO:0005874">
    <property type="term" value="C:microtubule"/>
    <property type="evidence" value="ECO:0000318"/>
    <property type="project" value="GO_Central"/>
</dbReference>
<dbReference type="GO" id="GO:0032991">
    <property type="term" value="C:protein-containing complex"/>
    <property type="evidence" value="ECO:0000314"/>
    <property type="project" value="MGI"/>
</dbReference>
<dbReference type="GO" id="GO:0005524">
    <property type="term" value="F:ATP binding"/>
    <property type="evidence" value="ECO:0007669"/>
    <property type="project" value="UniProtKB-KW"/>
</dbReference>
<dbReference type="GO" id="GO:0042802">
    <property type="term" value="F:identical protein binding"/>
    <property type="evidence" value="ECO:0000353"/>
    <property type="project" value="IntAct"/>
</dbReference>
<dbReference type="GO" id="GO:0008017">
    <property type="term" value="F:microtubule binding"/>
    <property type="evidence" value="ECO:0007669"/>
    <property type="project" value="InterPro"/>
</dbReference>
<dbReference type="GO" id="GO:0003777">
    <property type="term" value="F:microtubule motor activity"/>
    <property type="evidence" value="ECO:0000314"/>
    <property type="project" value="UniProtKB"/>
</dbReference>
<dbReference type="GO" id="GO:0060271">
    <property type="term" value="P:cilium assembly"/>
    <property type="evidence" value="ECO:0000315"/>
    <property type="project" value="UniProtKB"/>
</dbReference>
<dbReference type="GO" id="GO:0007019">
    <property type="term" value="P:microtubule depolymerization"/>
    <property type="evidence" value="ECO:0000314"/>
    <property type="project" value="UniProtKB"/>
</dbReference>
<dbReference type="GO" id="GO:0007018">
    <property type="term" value="P:microtubule-based movement"/>
    <property type="evidence" value="ECO:0007669"/>
    <property type="project" value="InterPro"/>
</dbReference>
<dbReference type="GO" id="GO:1902018">
    <property type="term" value="P:negative regulation of cilium assembly"/>
    <property type="evidence" value="ECO:0000315"/>
    <property type="project" value="UniProtKB"/>
</dbReference>
<dbReference type="CDD" id="cd01367">
    <property type="entry name" value="KISc_KIF2_like"/>
    <property type="match status" value="1"/>
</dbReference>
<dbReference type="CDD" id="cd09541">
    <property type="entry name" value="SAM_KIF24-like"/>
    <property type="match status" value="1"/>
</dbReference>
<dbReference type="FunFam" id="1.10.150.50:FF:000052">
    <property type="entry name" value="Kinesin family member 24"/>
    <property type="match status" value="1"/>
</dbReference>
<dbReference type="FunFam" id="3.40.850.10:FF:000012">
    <property type="entry name" value="Kinesin-like protein"/>
    <property type="match status" value="1"/>
</dbReference>
<dbReference type="Gene3D" id="3.40.850.10">
    <property type="entry name" value="Kinesin motor domain"/>
    <property type="match status" value="1"/>
</dbReference>
<dbReference type="Gene3D" id="1.10.150.50">
    <property type="entry name" value="Transcription Factor, Ets-1"/>
    <property type="match status" value="1"/>
</dbReference>
<dbReference type="InterPro" id="IPR027640">
    <property type="entry name" value="Kinesin-like_fam"/>
</dbReference>
<dbReference type="InterPro" id="IPR019821">
    <property type="entry name" value="Kinesin_motor_CS"/>
</dbReference>
<dbReference type="InterPro" id="IPR001752">
    <property type="entry name" value="Kinesin_motor_dom"/>
</dbReference>
<dbReference type="InterPro" id="IPR036961">
    <property type="entry name" value="Kinesin_motor_dom_sf"/>
</dbReference>
<dbReference type="InterPro" id="IPR027417">
    <property type="entry name" value="P-loop_NTPase"/>
</dbReference>
<dbReference type="InterPro" id="IPR001660">
    <property type="entry name" value="SAM"/>
</dbReference>
<dbReference type="InterPro" id="IPR013761">
    <property type="entry name" value="SAM/pointed_sf"/>
</dbReference>
<dbReference type="PANTHER" id="PTHR47971:SF20">
    <property type="entry name" value="KINESIN-LIKE PROTEIN KIF24"/>
    <property type="match status" value="1"/>
</dbReference>
<dbReference type="PANTHER" id="PTHR47971">
    <property type="entry name" value="KINESIN-RELATED PROTEIN 6"/>
    <property type="match status" value="1"/>
</dbReference>
<dbReference type="Pfam" id="PF00225">
    <property type="entry name" value="Kinesin"/>
    <property type="match status" value="1"/>
</dbReference>
<dbReference type="Pfam" id="PF00536">
    <property type="entry name" value="SAM_1"/>
    <property type="match status" value="1"/>
</dbReference>
<dbReference type="PRINTS" id="PR00380">
    <property type="entry name" value="KINESINHEAVY"/>
</dbReference>
<dbReference type="SMART" id="SM00129">
    <property type="entry name" value="KISc"/>
    <property type="match status" value="1"/>
</dbReference>
<dbReference type="SUPFAM" id="SSF52540">
    <property type="entry name" value="P-loop containing nucleoside triphosphate hydrolases"/>
    <property type="match status" value="1"/>
</dbReference>
<dbReference type="SUPFAM" id="SSF47769">
    <property type="entry name" value="SAM/Pointed domain"/>
    <property type="match status" value="1"/>
</dbReference>
<dbReference type="PROSITE" id="PS00411">
    <property type="entry name" value="KINESIN_MOTOR_1"/>
    <property type="match status" value="1"/>
</dbReference>
<dbReference type="PROSITE" id="PS50067">
    <property type="entry name" value="KINESIN_MOTOR_2"/>
    <property type="match status" value="1"/>
</dbReference>
<dbReference type="PROSITE" id="PS50105">
    <property type="entry name" value="SAM_DOMAIN"/>
    <property type="match status" value="1"/>
</dbReference>
<feature type="chain" id="PRO_0000278248" description="Kinesin-like protein KIF24">
    <location>
        <begin position="1"/>
        <end position="1368"/>
    </location>
</feature>
<feature type="domain" description="SAM" evidence="2">
    <location>
        <begin position="1"/>
        <end position="64"/>
    </location>
</feature>
<feature type="domain" description="Kinesin motor" evidence="3">
    <location>
        <begin position="223"/>
        <end position="546"/>
    </location>
</feature>
<feature type="region of interest" description="Disordered" evidence="4">
    <location>
        <begin position="89"/>
        <end position="112"/>
    </location>
</feature>
<feature type="region of interest" description="Interaction with MPHOSPH9" evidence="10">
    <location>
        <begin position="478"/>
        <end position="709"/>
    </location>
</feature>
<feature type="region of interest" description="Disordered" evidence="4">
    <location>
        <begin position="557"/>
        <end position="584"/>
    </location>
</feature>
<feature type="region of interest" description="Disordered" evidence="4">
    <location>
        <begin position="602"/>
        <end position="639"/>
    </location>
</feature>
<feature type="region of interest" description="Disordered" evidence="4">
    <location>
        <begin position="651"/>
        <end position="670"/>
    </location>
</feature>
<feature type="region of interest" description="Disordered" evidence="4">
    <location>
        <begin position="729"/>
        <end position="753"/>
    </location>
</feature>
<feature type="region of interest" description="Disordered" evidence="4">
    <location>
        <begin position="792"/>
        <end position="849"/>
    </location>
</feature>
<feature type="region of interest" description="Disordered" evidence="4">
    <location>
        <begin position="864"/>
        <end position="938"/>
    </location>
</feature>
<feature type="region of interest" description="Disordered" evidence="4">
    <location>
        <begin position="952"/>
        <end position="984"/>
    </location>
</feature>
<feature type="region of interest" description="Disordered" evidence="4">
    <location>
        <begin position="1054"/>
        <end position="1073"/>
    </location>
</feature>
<feature type="region of interest" description="Disordered" evidence="4">
    <location>
        <begin position="1086"/>
        <end position="1148"/>
    </location>
</feature>
<feature type="compositionally biased region" description="Polar residues" evidence="4">
    <location>
        <begin position="557"/>
        <end position="576"/>
    </location>
</feature>
<feature type="compositionally biased region" description="Acidic residues" evidence="4">
    <location>
        <begin position="819"/>
        <end position="830"/>
    </location>
</feature>
<feature type="compositionally biased region" description="Polar residues" evidence="4">
    <location>
        <begin position="839"/>
        <end position="849"/>
    </location>
</feature>
<feature type="compositionally biased region" description="Polar residues" evidence="4">
    <location>
        <begin position="871"/>
        <end position="881"/>
    </location>
</feature>
<feature type="compositionally biased region" description="Basic and acidic residues" evidence="4">
    <location>
        <begin position="882"/>
        <end position="906"/>
    </location>
</feature>
<feature type="compositionally biased region" description="Polar residues" evidence="4">
    <location>
        <begin position="1106"/>
        <end position="1119"/>
    </location>
</feature>
<feature type="compositionally biased region" description="Basic and acidic residues" evidence="4">
    <location>
        <begin position="1138"/>
        <end position="1148"/>
    </location>
</feature>
<feature type="binding site" evidence="3">
    <location>
        <begin position="313"/>
        <end position="320"/>
    </location>
    <ligand>
        <name>ATP</name>
        <dbReference type="ChEBI" id="CHEBI:30616"/>
    </ligand>
</feature>
<feature type="modified residue" description="Phosphoserine" evidence="14">
    <location>
        <position position="102"/>
    </location>
</feature>
<feature type="modified residue" description="Phosphoserine" evidence="15">
    <location>
        <position position="112"/>
    </location>
</feature>
<feature type="modified residue" description="Phosphoserine" evidence="14 15 16">
    <location>
        <position position="478"/>
    </location>
</feature>
<feature type="modified residue" description="Phosphoserine" evidence="1">
    <location>
        <position position="584"/>
    </location>
</feature>
<feature type="modified residue" description="Phosphothreonine; by NEK2" evidence="9">
    <location>
        <position position="621"/>
    </location>
</feature>
<feature type="modified residue" description="Phosphoserine; by NEK2" evidence="9">
    <location>
        <position position="622"/>
    </location>
</feature>
<feature type="modified residue" description="Phosphoserine" evidence="15 16">
    <location>
        <position position="646"/>
    </location>
</feature>
<feature type="modified residue" description="Phosphoserine" evidence="1">
    <location>
        <position position="826"/>
    </location>
</feature>
<feature type="modified residue" description="Phosphoserine" evidence="1">
    <location>
        <position position="829"/>
    </location>
</feature>
<feature type="modified residue" description="Phosphoserine" evidence="14">
    <location>
        <position position="1012"/>
    </location>
</feature>
<feature type="splice variant" id="VSP_023211" description="In isoform 3." evidence="11">
    <location>
        <begin position="209"/>
        <end position="1368"/>
    </location>
</feature>
<feature type="splice variant" id="VSP_023210" description="In isoform 2." evidence="13">
    <location>
        <begin position="272"/>
        <end position="405"/>
    </location>
</feature>
<feature type="splice variant" id="VSP_023212" description="In isoform 4." evidence="12">
    <original>SPSPIRQHPADKLPSREADLGEACQSRE</original>
    <variation>GPGEKTSYKAWLAGVWFVHRPHQVALQQ</variation>
    <location>
        <begin position="1131"/>
        <end position="1158"/>
    </location>
</feature>
<feature type="splice variant" id="VSP_023213" description="In isoform 4." evidence="12">
    <location>
        <begin position="1159"/>
        <end position="1368"/>
    </location>
</feature>
<feature type="sequence variant" id="VAR_030720" description="In dbSNP:rs16935508.">
    <original>D</original>
    <variation>E</variation>
    <location>
        <position position="50"/>
    </location>
</feature>
<feature type="sequence variant" id="VAR_061284" description="In dbSNP:rs41274845.">
    <original>R</original>
    <variation>G</variation>
    <location>
        <position position="109"/>
    </location>
</feature>
<feature type="sequence variant" id="VAR_030721" description="In dbSNP:rs10972048.">
    <original>M</original>
    <variation>V</variation>
    <location>
        <position position="140"/>
    </location>
</feature>
<feature type="sequence variant" id="VAR_049706" description="In dbSNP:rs17350674.">
    <original>W</original>
    <variation>L</variation>
    <location>
        <position position="218"/>
    </location>
</feature>
<feature type="sequence variant" id="VAR_061285" description="In dbSNP:rs41274041." evidence="5 6">
    <original>S</original>
    <variation>F</variation>
    <location>
        <position position="837"/>
    </location>
</feature>
<feature type="sequence variant" id="VAR_049707" description="In dbSNP:rs34101674.">
    <original>T</original>
    <variation>K</variation>
    <location>
        <position position="1077"/>
    </location>
</feature>
<feature type="mutagenesis site" description="Impairs ability to suppress cilia formation." evidence="7">
    <original>VD</original>
    <variation>AA</variation>
    <location>
        <begin position="263"/>
        <end position="264"/>
    </location>
</feature>
<feature type="mutagenesis site" description="Impairs ability to suppress cilia formation." evidence="7">
    <original>KEC</original>
    <variation>AAA</variation>
    <location>
        <begin position="483"/>
        <end position="485"/>
    </location>
</feature>
<feature type="mutagenesis site" description="Reduces phosphorylation by NEK2 and abolishes ability to suppress cilia formation." evidence="9">
    <original>TS</original>
    <variation>AA</variation>
    <location>
        <begin position="621"/>
        <end position="622"/>
    </location>
</feature>